<accession>P47112</accession>
<accession>D6VWL7</accession>
<gene>
    <name type="primary">TAH11</name>
    <name type="synonym">CDT1</name>
    <name type="synonym">SID2</name>
    <name type="ordered locus">YJR046W</name>
    <name type="ORF">J1641</name>
</gene>
<keyword id="KW-0002">3D-structure</keyword>
<keyword id="KW-0131">Cell cycle</keyword>
<keyword id="KW-0132">Cell division</keyword>
<keyword id="KW-0963">Cytoplasm</keyword>
<keyword id="KW-0238">DNA-binding</keyword>
<keyword id="KW-0498">Mitosis</keyword>
<keyword id="KW-0539">Nucleus</keyword>
<keyword id="KW-1185">Reference proteome</keyword>
<reference key="1">
    <citation type="journal article" date="1995" name="Yeast">
        <title>Analysis of a 42.5 kb DNA sequence of chromosome X reveals three tRNA genes and 14 new open reading frames including a gene most probably belonging to the family of ubiquitin-protein ligases.</title>
        <authorList>
            <person name="Huang M.-E."/>
            <person name="Chuat J.-C."/>
            <person name="Galibert F."/>
        </authorList>
    </citation>
    <scope>NUCLEOTIDE SEQUENCE [GENOMIC DNA]</scope>
    <source>
        <strain>ATCC 204508 / S288c</strain>
    </source>
</reference>
<reference key="2">
    <citation type="journal article" date="1996" name="EMBO J.">
        <title>Complete nucleotide sequence of Saccharomyces cerevisiae chromosome X.</title>
        <authorList>
            <person name="Galibert F."/>
            <person name="Alexandraki D."/>
            <person name="Baur A."/>
            <person name="Boles E."/>
            <person name="Chalwatzis N."/>
            <person name="Chuat J.-C."/>
            <person name="Coster F."/>
            <person name="Cziepluch C."/>
            <person name="de Haan M."/>
            <person name="Domdey H."/>
            <person name="Durand P."/>
            <person name="Entian K.-D."/>
            <person name="Gatius M."/>
            <person name="Goffeau A."/>
            <person name="Grivell L.A."/>
            <person name="Hennemann A."/>
            <person name="Herbert C.J."/>
            <person name="Heumann K."/>
            <person name="Hilger F."/>
            <person name="Hollenberg C.P."/>
            <person name="Huang M.-E."/>
            <person name="Jacq C."/>
            <person name="Jauniaux J.-C."/>
            <person name="Katsoulou C."/>
            <person name="Kirchrath L."/>
            <person name="Kleine K."/>
            <person name="Kordes E."/>
            <person name="Koetter P."/>
            <person name="Liebl S."/>
            <person name="Louis E.J."/>
            <person name="Manus V."/>
            <person name="Mewes H.-W."/>
            <person name="Miosga T."/>
            <person name="Obermaier B."/>
            <person name="Perea J."/>
            <person name="Pohl T.M."/>
            <person name="Portetelle D."/>
            <person name="Pujol A."/>
            <person name="Purnelle B."/>
            <person name="Ramezani Rad M."/>
            <person name="Rasmussen S.W."/>
            <person name="Rose M."/>
            <person name="Rossau R."/>
            <person name="Schaaff-Gerstenschlaeger I."/>
            <person name="Smits P.H.M."/>
            <person name="Scarcez T."/>
            <person name="Soriano N."/>
            <person name="To Van D."/>
            <person name="Tzermia M."/>
            <person name="Van Broekhoven A."/>
            <person name="Vandenbol M."/>
            <person name="Wedler H."/>
            <person name="von Wettstein D."/>
            <person name="Wambutt R."/>
            <person name="Zagulski M."/>
            <person name="Zollner A."/>
            <person name="Karpfinger-Hartl L."/>
        </authorList>
    </citation>
    <scope>NUCLEOTIDE SEQUENCE [LARGE SCALE GENOMIC DNA]</scope>
    <source>
        <strain>ATCC 204508 / S288c</strain>
    </source>
</reference>
<reference key="3">
    <citation type="journal article" date="2014" name="G3 (Bethesda)">
        <title>The reference genome sequence of Saccharomyces cerevisiae: Then and now.</title>
        <authorList>
            <person name="Engel S.R."/>
            <person name="Dietrich F.S."/>
            <person name="Fisk D.G."/>
            <person name="Binkley G."/>
            <person name="Balakrishnan R."/>
            <person name="Costanzo M.C."/>
            <person name="Dwight S.S."/>
            <person name="Hitz B.C."/>
            <person name="Karra K."/>
            <person name="Nash R.S."/>
            <person name="Weng S."/>
            <person name="Wong E.D."/>
            <person name="Lloyd P."/>
            <person name="Skrzypek M.S."/>
            <person name="Miyasato S.R."/>
            <person name="Simison M."/>
            <person name="Cherry J.M."/>
        </authorList>
    </citation>
    <scope>GENOME REANNOTATION</scope>
    <source>
        <strain>ATCC 204508 / S288c</strain>
    </source>
</reference>
<reference key="4">
    <citation type="journal article" date="2001" name="Genetics">
        <title>Mutations in SID2, a novel gene in Saccharomyces cerevisiae, cause synthetic lethality with sic1 deletion and may cause a defect during S phase.</title>
        <authorList>
            <person name="Jacobson M.D."/>
            <person name="Munoz C.X."/>
            <person name="Knox K.S."/>
            <person name="Williams B.E."/>
            <person name="Lu L.L."/>
            <person name="Cross F.R."/>
            <person name="Vallen E.A."/>
        </authorList>
    </citation>
    <scope>FUNCTION</scope>
    <scope>SUBCELLULAR LOCATION</scope>
</reference>
<reference key="5">
    <citation type="journal article" date="2002" name="Curr. Biol.">
        <title>Identification of Tah11/Sid2 as the ortholog of the replication licensing factor Cdt1 in Saccharomyces cerevisiae.</title>
        <authorList>
            <person name="Devault A."/>
            <person name="Vallen E.A."/>
            <person name="Yuan T."/>
            <person name="Green S."/>
            <person name="Bensimon A."/>
            <person name="Schwob E."/>
        </authorList>
    </citation>
    <scope>FUNCTION</scope>
</reference>
<reference key="6">
    <citation type="journal article" date="2002" name="Nat. Cell Biol.">
        <title>Interdependent nuclear accumulation of budding yeast Cdt1 and Mcm2-7 during G1 phase.</title>
        <authorList>
            <person name="Tanaka S."/>
            <person name="Diffley J.F."/>
        </authorList>
    </citation>
    <scope>SUBCELLULAR LOCATION</scope>
    <scope>INTERACTION WITH MCM2</scope>
</reference>
<reference key="7">
    <citation type="journal article" date="2003" name="Nature">
        <title>Global analysis of protein expression in yeast.</title>
        <authorList>
            <person name="Ghaemmaghami S."/>
            <person name="Huh W.-K."/>
            <person name="Bower K."/>
            <person name="Howson R.W."/>
            <person name="Belle A."/>
            <person name="Dephoure N."/>
            <person name="O'Shea E.K."/>
            <person name="Weissman J.S."/>
        </authorList>
    </citation>
    <scope>LEVEL OF PROTEIN EXPRESSION [LARGE SCALE ANALYSIS]</scope>
</reference>
<reference key="8">
    <citation type="journal article" date="2006" name="Genes Cells">
        <title>Reconstitution of Saccharomyces cerevisiae prereplicative complex assembly in vitro.</title>
        <authorList>
            <person name="Kawasaki Y."/>
            <person name="Kim H.D."/>
            <person name="Kojima A."/>
            <person name="Seki T."/>
            <person name="Sugino A."/>
        </authorList>
    </citation>
    <scope>FUNCTION</scope>
    <scope>DNA-BINDING</scope>
    <scope>ASSOCIATION WITH THE MCM2-7 COMPLEX</scope>
</reference>
<reference key="9">
    <citation type="journal article" date="2006" name="Mol. Cell">
        <title>Sequential ATP hydrolysis by Cdc6 and ORC directs loading of the Mcm2-7 helicase.</title>
        <authorList>
            <person name="Randell J.C."/>
            <person name="Bowers J.L."/>
            <person name="Rodriguez H.K."/>
            <person name="Bell S.P."/>
        </authorList>
    </citation>
    <scope>FUNCTION</scope>
    <scope>DNA-BINDING</scope>
</reference>
<reference key="10">
    <citation type="journal article" date="2007" name="FEMS Yeast Res.">
        <title>Interaction between ORC and Cdt1p of Saccharomyces cerevisiae.</title>
        <authorList>
            <person name="Asano T."/>
            <person name="Makise M."/>
            <person name="Takehara M."/>
            <person name="Mizushima T."/>
        </authorList>
    </citation>
    <scope>FUNCTION</scope>
    <scope>DNA-BINDING</scope>
    <scope>INTERACTION WITH ORC1; ORC2 AND ORC6</scope>
</reference>
<reference key="11">
    <citation type="journal article" date="2007" name="Genes Dev.">
        <title>Orc6 is required for dynamic recruitment of Cdt1 during repeated Mcm2-7 loading.</title>
        <authorList>
            <person name="Chen S."/>
            <person name="de Vries M.A."/>
            <person name="Bell S.P."/>
        </authorList>
    </citation>
    <scope>FUNCTION</scope>
    <scope>INTERACTION WITH ORC6</scope>
</reference>
<reference key="12">
    <citation type="journal article" date="2009" name="Cell">
        <title>Concerted loading of Mcm2-7 double hexamers around DNA during DNA replication origin licensing.</title>
        <authorList>
            <person name="Remus D."/>
            <person name="Beuron F."/>
            <person name="Tolun G."/>
            <person name="Griffith J.D."/>
            <person name="Morris E.P."/>
            <person name="Diffley J.F."/>
        </authorList>
    </citation>
    <scope>IDENTIFICATION BY MASS SPECTROMETRY</scope>
    <scope>ASSOCIATION WITH THE MCM2-7 COMPLEX</scope>
    <scope>FUNCTION</scope>
</reference>
<comment type="function">
    <text evidence="1 3 5 6 7 8 9">DNA replication licensing factor, required for pre-replication complex assembly. Faithful duplication of the genetic material requires 'once per cell cycle' DNA replication initiation and elongation. Central to this control is the tightly regulated formation of prereplicative complexes (preRCs) at future origins of DNA replication. Required for the recruitment of the MCM2-7 helicase complex to the replication origins.</text>
</comment>
<comment type="subunit">
    <text evidence="2 7 8">Associates with the MCM2-7 complex. Interacts with MCM2, ORC1, ORC2 and ORC6.</text>
</comment>
<comment type="interaction">
    <interactant intactId="EBI-25503">
        <id>P47112</id>
    </interactant>
    <interactant intactId="EBI-10556">
        <id>P53091</id>
        <label>MCM6</label>
    </interactant>
    <organismsDiffer>false</organismsDiffer>
    <experiments>4</experiments>
</comment>
<comment type="subcellular location">
    <subcellularLocation>
        <location>Cytoplasm</location>
    </subcellularLocation>
    <subcellularLocation>
        <location>Nucleus</location>
    </subcellularLocation>
    <text>Undergoes cell cycle-dependent changes in its nuclear localization. Exits the nucleus and remains in the cytoplasm during S phase through early mitosis, and re-accumulates in the nucleus around the end of mitosis.</text>
</comment>
<comment type="miscellaneous">
    <text evidence="4">Present with 2190 molecules/cell in log phase SD medium.</text>
</comment>
<comment type="similarity">
    <text evidence="10">Belongs to the Cdt1 family.</text>
</comment>
<sequence>MSGTANSRRKEVLRVPVIDLNRVSDEEQLLPVVRAILLQHDTFLLKNYANKAVLDALLAGLTTKDLPDTSQGFDANFTGTLPLEDDVWLEQYIFDTDPQLRFDRKCRNESLCSIYSRLFKLGLFFAQLCVKSVVSSAELQDCISTSHYATKLTRYFNDNGSTHDGADAGATVLPTGDDFQYLFERDYVTFLPTGVLTIFPCAKAIRYKPSTMATTDNSWVSIDEPDCLLFHTGTLLARWSQGMHTTSPLQIDPRANIVSLTIWPPLTTPISSKGEGTIANHLLEQQIKAFPKVAQQYYPRELSILRLQDAMKFVKELFTVCETVLSLNALSRSTGVPPELHVLLPQISSMMKRKIVQDDILKLLTIWSDAYVVELNSRGELTMNLPKRDNLTTLTNKSRTLAFVERAESWYQQVIASKDEIMTDVPAFKINKRRSSSNSKTVLSSKVQTKSSNANALNNSRYLANSKENFMYKEKMPDSQANLMDRLRERERRSAALLSQRQKRYQQFLAMKMTQVFDILFSLTRGQPYTETYLSSLIVDSLQDSNNPIGTKEASEILAGLQGILPMDISVHQVDGGLKVYRWNSLDKNRFSKLLQIHKSKQQD</sequence>
<dbReference type="EMBL" id="L36344">
    <property type="protein sequence ID" value="AAA88748.1"/>
    <property type="molecule type" value="Genomic_DNA"/>
</dbReference>
<dbReference type="EMBL" id="Z49546">
    <property type="protein sequence ID" value="CAA89574.1"/>
    <property type="molecule type" value="Genomic_DNA"/>
</dbReference>
<dbReference type="EMBL" id="BK006943">
    <property type="protein sequence ID" value="DAA08833.1"/>
    <property type="molecule type" value="Genomic_DNA"/>
</dbReference>
<dbReference type="PIR" id="S57065">
    <property type="entry name" value="S57065"/>
</dbReference>
<dbReference type="RefSeq" id="NP_012580.1">
    <property type="nucleotide sequence ID" value="NM_001181704.1"/>
</dbReference>
<dbReference type="PDB" id="5ME9">
    <property type="method" value="X-ray"/>
    <property type="resolution" value="2.70 A"/>
    <property type="chains" value="A/B/C=2-438"/>
</dbReference>
<dbReference type="PDB" id="5MEA">
    <property type="method" value="X-ray"/>
    <property type="resolution" value="2.15 A"/>
    <property type="chains" value="A=1-438"/>
</dbReference>
<dbReference type="PDB" id="5MEB">
    <property type="method" value="X-ray"/>
    <property type="resolution" value="1.80 A"/>
    <property type="chains" value="A/B=495-604"/>
</dbReference>
<dbReference type="PDB" id="5MEC">
    <property type="method" value="X-ray"/>
    <property type="resolution" value="2.13 A"/>
    <property type="chains" value="A=272-438"/>
</dbReference>
<dbReference type="PDB" id="5V8F">
    <property type="method" value="EM"/>
    <property type="resolution" value="3.90 A"/>
    <property type="chains" value="8=1-604"/>
</dbReference>
<dbReference type="PDB" id="5XF8">
    <property type="method" value="EM"/>
    <property type="resolution" value="7.10 A"/>
    <property type="chains" value="C=1-604"/>
</dbReference>
<dbReference type="PDB" id="6WGG">
    <property type="method" value="EM"/>
    <property type="resolution" value="8.10 A"/>
    <property type="chains" value="8=1-604"/>
</dbReference>
<dbReference type="PDB" id="6WGI">
    <property type="method" value="EM"/>
    <property type="resolution" value="10.00 A"/>
    <property type="chains" value="L=1-604"/>
</dbReference>
<dbReference type="PDB" id="9BCX">
    <property type="method" value="EM"/>
    <property type="resolution" value="6.10 A"/>
    <property type="chains" value="8=1-604"/>
</dbReference>
<dbReference type="PDB" id="9GJP">
    <property type="method" value="EM"/>
    <property type="resolution" value="3.40 A"/>
    <property type="chains" value="8=1-604"/>
</dbReference>
<dbReference type="PDB" id="9GJW">
    <property type="method" value="EM"/>
    <property type="resolution" value="3.30 A"/>
    <property type="chains" value="8=1-604"/>
</dbReference>
<dbReference type="PDB" id="9GM5">
    <property type="method" value="EM"/>
    <property type="resolution" value="3.70 A"/>
    <property type="chains" value="8=1-604"/>
</dbReference>
<dbReference type="PDBsum" id="5ME9"/>
<dbReference type="PDBsum" id="5MEA"/>
<dbReference type="PDBsum" id="5MEB"/>
<dbReference type="PDBsum" id="5MEC"/>
<dbReference type="PDBsum" id="5V8F"/>
<dbReference type="PDBsum" id="5XF8"/>
<dbReference type="PDBsum" id="6WGG"/>
<dbReference type="PDBsum" id="6WGI"/>
<dbReference type="PDBsum" id="9BCX"/>
<dbReference type="PDBsum" id="9GJP"/>
<dbReference type="PDBsum" id="9GJW"/>
<dbReference type="PDBsum" id="9GM5"/>
<dbReference type="EMDB" id="EMD-21665"/>
<dbReference type="EMDB" id="EMD-21666"/>
<dbReference type="EMDB" id="EMD-51401"/>
<dbReference type="EMDB" id="EMD-51407"/>
<dbReference type="EMDB" id="EMD-51441"/>
<dbReference type="EMDB" id="EMD-6671"/>
<dbReference type="EMDB" id="EMD-8540"/>
<dbReference type="SMR" id="P47112"/>
<dbReference type="BioGRID" id="33798">
    <property type="interactions" value="191"/>
</dbReference>
<dbReference type="DIP" id="DIP-7948N"/>
<dbReference type="FunCoup" id="P47112">
    <property type="interactions" value="260"/>
</dbReference>
<dbReference type="IntAct" id="P47112">
    <property type="interactions" value="17"/>
</dbReference>
<dbReference type="STRING" id="4932.YJR046W"/>
<dbReference type="GlyGen" id="P47112">
    <property type="glycosylation" value="2 sites, 1 O-linked glycan (2 sites)"/>
</dbReference>
<dbReference type="iPTMnet" id="P47112"/>
<dbReference type="PaxDb" id="4932-YJR046W"/>
<dbReference type="PeptideAtlas" id="P47112"/>
<dbReference type="EnsemblFungi" id="YJR046W_mRNA">
    <property type="protein sequence ID" value="YJR046W"/>
    <property type="gene ID" value="YJR046W"/>
</dbReference>
<dbReference type="GeneID" id="853504"/>
<dbReference type="KEGG" id="sce:YJR046W"/>
<dbReference type="AGR" id="SGD:S000003807"/>
<dbReference type="SGD" id="S000003807">
    <property type="gene designation" value="TAH11"/>
</dbReference>
<dbReference type="VEuPathDB" id="FungiDB:YJR046W"/>
<dbReference type="eggNOG" id="ENOG502QRI1">
    <property type="taxonomic scope" value="Eukaryota"/>
</dbReference>
<dbReference type="HOGENOM" id="CLU_492622_0_0_1"/>
<dbReference type="InParanoid" id="P47112"/>
<dbReference type="OMA" id="DCLLFHT"/>
<dbReference type="OrthoDB" id="4058916at2759"/>
<dbReference type="BioCyc" id="YEAST:G3O-31681-MONOMER"/>
<dbReference type="BioGRID-ORCS" id="853504">
    <property type="hits" value="1 hit in 10 CRISPR screens"/>
</dbReference>
<dbReference type="PRO" id="PR:P47112"/>
<dbReference type="Proteomes" id="UP000002311">
    <property type="component" value="Chromosome X"/>
</dbReference>
<dbReference type="RNAct" id="P47112">
    <property type="molecule type" value="protein"/>
</dbReference>
<dbReference type="GO" id="GO:0005737">
    <property type="term" value="C:cytoplasm"/>
    <property type="evidence" value="ECO:0000314"/>
    <property type="project" value="SGD"/>
</dbReference>
<dbReference type="GO" id="GO:0005656">
    <property type="term" value="C:nuclear pre-replicative complex"/>
    <property type="evidence" value="ECO:0000314"/>
    <property type="project" value="SGD"/>
</dbReference>
<dbReference type="GO" id="GO:0005654">
    <property type="term" value="C:nucleoplasm"/>
    <property type="evidence" value="ECO:0000304"/>
    <property type="project" value="Reactome"/>
</dbReference>
<dbReference type="GO" id="GO:0005634">
    <property type="term" value="C:nucleus"/>
    <property type="evidence" value="ECO:0000314"/>
    <property type="project" value="SGD"/>
</dbReference>
<dbReference type="GO" id="GO:0003688">
    <property type="term" value="F:DNA replication origin binding"/>
    <property type="evidence" value="ECO:0000314"/>
    <property type="project" value="SGD"/>
</dbReference>
<dbReference type="GO" id="GO:0051301">
    <property type="term" value="P:cell division"/>
    <property type="evidence" value="ECO:0007669"/>
    <property type="project" value="UniProtKB-KW"/>
</dbReference>
<dbReference type="GO" id="GO:0000727">
    <property type="term" value="P:double-strand break repair via break-induced replication"/>
    <property type="evidence" value="ECO:0000315"/>
    <property type="project" value="SGD"/>
</dbReference>
<dbReference type="GO" id="GO:0006267">
    <property type="term" value="P:pre-replicative complex assembly involved in nuclear cell cycle DNA replication"/>
    <property type="evidence" value="ECO:0000314"/>
    <property type="project" value="SGD"/>
</dbReference>
<dbReference type="GO" id="GO:0030174">
    <property type="term" value="P:regulation of DNA-templated DNA replication initiation"/>
    <property type="evidence" value="ECO:0000314"/>
    <property type="project" value="SGD"/>
</dbReference>
<dbReference type="Gene3D" id="1.10.10.1420">
    <property type="entry name" value="DNA replication factor Cdt1, C-terminal WH domain"/>
    <property type="match status" value="1"/>
</dbReference>
<dbReference type="InterPro" id="IPR032054">
    <property type="entry name" value="Cdt1_C"/>
</dbReference>
<dbReference type="InterPro" id="IPR038090">
    <property type="entry name" value="Cdt1_C_WH_dom_sf"/>
</dbReference>
<dbReference type="Pfam" id="PF16679">
    <property type="entry name" value="CDT1_C"/>
    <property type="match status" value="1"/>
</dbReference>
<proteinExistence type="evidence at protein level"/>
<name>CDT1_YEAST</name>
<protein>
    <recommendedName>
        <fullName>Cell division cycle protein CDT1</fullName>
    </recommendedName>
    <alternativeName>
        <fullName>SIC1 indispensable protein 2</fullName>
    </alternativeName>
    <alternativeName>
        <fullName>Topoisomerase-A hypersensitive protein 11</fullName>
    </alternativeName>
</protein>
<organism>
    <name type="scientific">Saccharomyces cerevisiae (strain ATCC 204508 / S288c)</name>
    <name type="common">Baker's yeast</name>
    <dbReference type="NCBI Taxonomy" id="559292"/>
    <lineage>
        <taxon>Eukaryota</taxon>
        <taxon>Fungi</taxon>
        <taxon>Dikarya</taxon>
        <taxon>Ascomycota</taxon>
        <taxon>Saccharomycotina</taxon>
        <taxon>Saccharomycetes</taxon>
        <taxon>Saccharomycetales</taxon>
        <taxon>Saccharomycetaceae</taxon>
        <taxon>Saccharomyces</taxon>
    </lineage>
</organism>
<evidence type="ECO:0000269" key="1">
    <source>
    </source>
</evidence>
<evidence type="ECO:0000269" key="2">
    <source>
    </source>
</evidence>
<evidence type="ECO:0000269" key="3">
    <source>
    </source>
</evidence>
<evidence type="ECO:0000269" key="4">
    <source>
    </source>
</evidence>
<evidence type="ECO:0000269" key="5">
    <source>
    </source>
</evidence>
<evidence type="ECO:0000269" key="6">
    <source>
    </source>
</evidence>
<evidence type="ECO:0000269" key="7">
    <source>
    </source>
</evidence>
<evidence type="ECO:0000269" key="8">
    <source>
    </source>
</evidence>
<evidence type="ECO:0000269" key="9">
    <source>
    </source>
</evidence>
<evidence type="ECO:0000305" key="10"/>
<evidence type="ECO:0007829" key="11">
    <source>
        <dbReference type="PDB" id="5ME9"/>
    </source>
</evidence>
<evidence type="ECO:0007829" key="12">
    <source>
        <dbReference type="PDB" id="5MEA"/>
    </source>
</evidence>
<evidence type="ECO:0007829" key="13">
    <source>
        <dbReference type="PDB" id="5MEB"/>
    </source>
</evidence>
<evidence type="ECO:0007829" key="14">
    <source>
        <dbReference type="PDB" id="5MEC"/>
    </source>
</evidence>
<feature type="chain" id="PRO_0000203095" description="Cell division cycle protein CDT1">
    <location>
        <begin position="1"/>
        <end position="604"/>
    </location>
</feature>
<feature type="strand" evidence="12">
    <location>
        <begin position="17"/>
        <end position="19"/>
    </location>
</feature>
<feature type="turn" evidence="12">
    <location>
        <begin position="20"/>
        <end position="22"/>
    </location>
</feature>
<feature type="helix" evidence="12">
    <location>
        <begin position="26"/>
        <end position="37"/>
    </location>
</feature>
<feature type="strand" evidence="12">
    <location>
        <begin position="41"/>
        <end position="47"/>
    </location>
</feature>
<feature type="helix" evidence="12">
    <location>
        <begin position="51"/>
        <end position="60"/>
    </location>
</feature>
<feature type="turn" evidence="12">
    <location>
        <begin position="61"/>
        <end position="63"/>
    </location>
</feature>
<feature type="strand" evidence="12">
    <location>
        <begin position="79"/>
        <end position="82"/>
    </location>
</feature>
<feature type="strand" evidence="12">
    <location>
        <begin position="87"/>
        <end position="96"/>
    </location>
</feature>
<feature type="helix" evidence="12">
    <location>
        <begin position="109"/>
        <end position="133"/>
    </location>
</feature>
<feature type="helix" evidence="12">
    <location>
        <begin position="137"/>
        <end position="139"/>
    </location>
</feature>
<feature type="strand" evidence="11">
    <location>
        <begin position="141"/>
        <end position="144"/>
    </location>
</feature>
<feature type="strand" evidence="12">
    <location>
        <begin position="145"/>
        <end position="147"/>
    </location>
</feature>
<feature type="strand" evidence="12">
    <location>
        <begin position="149"/>
        <end position="157"/>
    </location>
</feature>
<feature type="strand" evidence="12">
    <location>
        <begin position="188"/>
        <end position="190"/>
    </location>
</feature>
<feature type="strand" evidence="12">
    <location>
        <begin position="194"/>
        <end position="207"/>
    </location>
</feature>
<feature type="strand" evidence="12">
    <location>
        <begin position="220"/>
        <end position="224"/>
    </location>
</feature>
<feature type="strand" evidence="12">
    <location>
        <begin position="227"/>
        <end position="232"/>
    </location>
</feature>
<feature type="helix" evidence="12">
    <location>
        <begin position="234"/>
        <end position="240"/>
    </location>
</feature>
<feature type="strand" evidence="12">
    <location>
        <begin position="249"/>
        <end position="251"/>
    </location>
</feature>
<feature type="helix" evidence="11">
    <location>
        <begin position="253"/>
        <end position="255"/>
    </location>
</feature>
<feature type="strand" evidence="12">
    <location>
        <begin position="258"/>
        <end position="264"/>
    </location>
</feature>
<feature type="helix" evidence="12">
    <location>
        <begin position="278"/>
        <end position="289"/>
    </location>
</feature>
<feature type="helix" evidence="12">
    <location>
        <begin position="291"/>
        <end position="297"/>
    </location>
</feature>
<feature type="helix" evidence="14">
    <location>
        <begin position="299"/>
        <end position="328"/>
    </location>
</feature>
<feature type="strand" evidence="12">
    <location>
        <begin position="333"/>
        <end position="335"/>
    </location>
</feature>
<feature type="helix" evidence="14">
    <location>
        <begin position="340"/>
        <end position="351"/>
    </location>
</feature>
<feature type="helix" evidence="14">
    <location>
        <begin position="357"/>
        <end position="366"/>
    </location>
</feature>
<feature type="strand" evidence="14">
    <location>
        <begin position="370"/>
        <end position="375"/>
    </location>
</feature>
<feature type="strand" evidence="14">
    <location>
        <begin position="381"/>
        <end position="384"/>
    </location>
</feature>
<feature type="helix" evidence="12">
    <location>
        <begin position="391"/>
        <end position="395"/>
    </location>
</feature>
<feature type="helix" evidence="14">
    <location>
        <begin position="399"/>
        <end position="416"/>
    </location>
</feature>
<feature type="strand" evidence="14">
    <location>
        <begin position="417"/>
        <end position="419"/>
    </location>
</feature>
<feature type="helix" evidence="13">
    <location>
        <begin position="495"/>
        <end position="522"/>
    </location>
</feature>
<feature type="strand" evidence="13">
    <location>
        <begin position="525"/>
        <end position="527"/>
    </location>
</feature>
<feature type="helix" evidence="13">
    <location>
        <begin position="531"/>
        <end position="542"/>
    </location>
</feature>
<feature type="helix" evidence="13">
    <location>
        <begin position="551"/>
        <end position="564"/>
    </location>
</feature>
<feature type="turn" evidence="13">
    <location>
        <begin position="566"/>
        <end position="568"/>
    </location>
</feature>
<feature type="strand" evidence="13">
    <location>
        <begin position="569"/>
        <end position="572"/>
    </location>
</feature>
<feature type="strand" evidence="13">
    <location>
        <begin position="580"/>
        <end position="584"/>
    </location>
</feature>
<feature type="helix" evidence="13">
    <location>
        <begin position="588"/>
        <end position="602"/>
    </location>
</feature>